<keyword id="KW-0963">Cytoplasm</keyword>
<keyword id="KW-1185">Reference proteome</keyword>
<sequence>MLALRSGLRTALAPRVLTPQVCSPFATGPRQSNGTFYEFRTYFLKPSKTNEFLENFKNSVHLRTAHSEMIGYWTVEFGGRTNRVFHIWKYDNFAHRTAVRKALAKDKEWQERFLIPNLAFIDKQEVEITYLVPWCKIGTPPKEGVYELATFQMKPGGPALWGNAFKRAVNAHVELGYSTLVGVFHTEYGALNRVHVLWWNESADSRAAGRHWSHEDPRVVAAVRESVSYLESQQNTFLIPTSFSPLK</sequence>
<dbReference type="EMBL" id="AF353623">
    <property type="protein sequence ID" value="AAL56225.1"/>
    <property type="molecule type" value="mRNA"/>
</dbReference>
<dbReference type="EMBL" id="AK004458">
    <property type="protein sequence ID" value="BAB23312.1"/>
    <property type="molecule type" value="mRNA"/>
</dbReference>
<dbReference type="EMBL" id="AK008786">
    <property type="protein sequence ID" value="BAB25894.1"/>
    <property type="molecule type" value="mRNA"/>
</dbReference>
<dbReference type="EMBL" id="AK012480">
    <property type="protein sequence ID" value="BAB28269.1"/>
    <property type="molecule type" value="mRNA"/>
</dbReference>
<dbReference type="EMBL" id="AL772397">
    <property type="status" value="NOT_ANNOTATED_CDS"/>
    <property type="molecule type" value="Genomic_DNA"/>
</dbReference>
<dbReference type="EMBL" id="CH466565">
    <property type="protein sequence ID" value="EDL02287.1"/>
    <property type="molecule type" value="Genomic_DNA"/>
</dbReference>
<dbReference type="EMBL" id="BC019505">
    <property type="protein sequence ID" value="AAH19505.1"/>
    <property type="molecule type" value="mRNA"/>
</dbReference>
<dbReference type="CCDS" id="CCDS18186.1"/>
<dbReference type="RefSeq" id="NP_079899.1">
    <property type="nucleotide sequence ID" value="NM_025623.4"/>
</dbReference>
<dbReference type="SMR" id="Q9CQE1"/>
<dbReference type="BioGRID" id="211542">
    <property type="interactions" value="5"/>
</dbReference>
<dbReference type="FunCoup" id="Q9CQE1">
    <property type="interactions" value="751"/>
</dbReference>
<dbReference type="IntAct" id="Q9CQE1">
    <property type="interactions" value="1"/>
</dbReference>
<dbReference type="STRING" id="10090.ENSMUSP00000015391"/>
<dbReference type="iPTMnet" id="Q9CQE1"/>
<dbReference type="PhosphoSitePlus" id="Q9CQE1"/>
<dbReference type="SwissPalm" id="Q9CQE1"/>
<dbReference type="jPOST" id="Q9CQE1"/>
<dbReference type="PaxDb" id="10090-ENSMUSP00000015391"/>
<dbReference type="PeptideAtlas" id="Q9CQE1"/>
<dbReference type="ProteomicsDB" id="293715"/>
<dbReference type="Pumba" id="Q9CQE1"/>
<dbReference type="Ensembl" id="ENSMUST00000015391.10">
    <property type="protein sequence ID" value="ENSMUSP00000015391.4"/>
    <property type="gene ID" value="ENSMUSG00000015247.11"/>
</dbReference>
<dbReference type="GeneID" id="66536"/>
<dbReference type="KEGG" id="mmu:66536"/>
<dbReference type="UCSC" id="uc008swt.1">
    <property type="organism name" value="mouse"/>
</dbReference>
<dbReference type="AGR" id="MGI:1913786"/>
<dbReference type="CTD" id="55335"/>
<dbReference type="MGI" id="MGI:1913786">
    <property type="gene designation" value="Nipsnap3b"/>
</dbReference>
<dbReference type="VEuPathDB" id="HostDB:ENSMUSG00000015247"/>
<dbReference type="eggNOG" id="KOG2883">
    <property type="taxonomic scope" value="Eukaryota"/>
</dbReference>
<dbReference type="GeneTree" id="ENSGT00950000183018"/>
<dbReference type="HOGENOM" id="CLU_085919_0_1_1"/>
<dbReference type="InParanoid" id="Q9CQE1"/>
<dbReference type="OMA" id="AVHAHIN"/>
<dbReference type="OrthoDB" id="10262843at2759"/>
<dbReference type="PhylomeDB" id="Q9CQE1"/>
<dbReference type="TreeFam" id="TF314501"/>
<dbReference type="BioGRID-ORCS" id="66536">
    <property type="hits" value="3 hits in 75 CRISPR screens"/>
</dbReference>
<dbReference type="PRO" id="PR:Q9CQE1"/>
<dbReference type="Proteomes" id="UP000000589">
    <property type="component" value="Chromosome 4"/>
</dbReference>
<dbReference type="RNAct" id="Q9CQE1">
    <property type="molecule type" value="protein"/>
</dbReference>
<dbReference type="Bgee" id="ENSMUSG00000015247">
    <property type="expression patterns" value="Expressed in epithelium of small intestine and 242 other cell types or tissues"/>
</dbReference>
<dbReference type="ExpressionAtlas" id="Q9CQE1">
    <property type="expression patterns" value="baseline and differential"/>
</dbReference>
<dbReference type="GO" id="GO:0005829">
    <property type="term" value="C:cytosol"/>
    <property type="evidence" value="ECO:0007669"/>
    <property type="project" value="UniProtKB-SubCell"/>
</dbReference>
<dbReference type="GO" id="GO:0005739">
    <property type="term" value="C:mitochondrion"/>
    <property type="evidence" value="ECO:0007005"/>
    <property type="project" value="MGI"/>
</dbReference>
<dbReference type="GO" id="GO:0000423">
    <property type="term" value="P:mitophagy"/>
    <property type="evidence" value="ECO:0007669"/>
    <property type="project" value="UniProtKB-ARBA"/>
</dbReference>
<dbReference type="FunFam" id="3.30.70.100:FF:000017">
    <property type="entry name" value="Protein NipSnap homolog 3A"/>
    <property type="match status" value="1"/>
</dbReference>
<dbReference type="FunFam" id="3.30.70.100:FF:000019">
    <property type="entry name" value="Protein NipSnap homolog 3A"/>
    <property type="match status" value="1"/>
</dbReference>
<dbReference type="Gene3D" id="3.30.70.100">
    <property type="match status" value="2"/>
</dbReference>
<dbReference type="InterPro" id="IPR011008">
    <property type="entry name" value="Dimeric_a/b-barrel"/>
</dbReference>
<dbReference type="InterPro" id="IPR012577">
    <property type="entry name" value="NIPSNAP"/>
</dbReference>
<dbReference type="InterPro" id="IPR051557">
    <property type="entry name" value="NipSnap_domain"/>
</dbReference>
<dbReference type="PANTHER" id="PTHR21017">
    <property type="entry name" value="NIPSNAP-RELATED"/>
    <property type="match status" value="1"/>
</dbReference>
<dbReference type="PANTHER" id="PTHR21017:SF19">
    <property type="entry name" value="PROTEIN NIPSNAP HOMOLOG 3B"/>
    <property type="match status" value="1"/>
</dbReference>
<dbReference type="Pfam" id="PF07978">
    <property type="entry name" value="NIPSNAP"/>
    <property type="match status" value="2"/>
</dbReference>
<dbReference type="SUPFAM" id="SSF54909">
    <property type="entry name" value="Dimeric alpha+beta barrel"/>
    <property type="match status" value="2"/>
</dbReference>
<organism>
    <name type="scientific">Mus musculus</name>
    <name type="common">Mouse</name>
    <dbReference type="NCBI Taxonomy" id="10090"/>
    <lineage>
        <taxon>Eukaryota</taxon>
        <taxon>Metazoa</taxon>
        <taxon>Chordata</taxon>
        <taxon>Craniata</taxon>
        <taxon>Vertebrata</taxon>
        <taxon>Euteleostomi</taxon>
        <taxon>Mammalia</taxon>
        <taxon>Eutheria</taxon>
        <taxon>Euarchontoglires</taxon>
        <taxon>Glires</taxon>
        <taxon>Rodentia</taxon>
        <taxon>Myomorpha</taxon>
        <taxon>Muroidea</taxon>
        <taxon>Muridae</taxon>
        <taxon>Murinae</taxon>
        <taxon>Mus</taxon>
        <taxon>Mus</taxon>
    </lineage>
</organism>
<proteinExistence type="evidence at protein level"/>
<feature type="chain" id="PRO_0000221155" description="Protein NipSnap homolog 3B">
    <location>
        <begin position="1"/>
        <end position="247"/>
    </location>
</feature>
<feature type="modified residue" description="N6-succinyllysine" evidence="3">
    <location>
        <position position="45"/>
    </location>
</feature>
<feature type="modified residue" description="N6-succinyllysine" evidence="3">
    <location>
        <position position="48"/>
    </location>
</feature>
<feature type="modified residue" description="N6-succinyllysine" evidence="3">
    <location>
        <position position="57"/>
    </location>
</feature>
<feature type="modified residue" description="N6-succinyllysine" evidence="3">
    <location>
        <position position="166"/>
    </location>
</feature>
<feature type="sequence conflict" description="In Ref. 1; AAL56225." evidence="2" ref="1">
    <original>R</original>
    <variation>L</variation>
    <location>
        <position position="5"/>
    </location>
</feature>
<feature type="sequence conflict" description="In Ref. 1; AAL56225." evidence="2" ref="1">
    <original>N</original>
    <variation>D</variation>
    <location>
        <position position="33"/>
    </location>
</feature>
<feature type="sequence conflict" description="In Ref. 1; AAL56225." evidence="2" ref="1">
    <original>F</original>
    <variation>L</variation>
    <location>
        <position position="36"/>
    </location>
</feature>
<reference key="1">
    <citation type="submission" date="2001-02" db="EMBL/GenBank/DDBJ databases">
        <title>Cloning and characterization of a novel NIPSNAP-related protein.</title>
        <authorList>
            <person name="Shaw D.J."/>
            <person name="Carrello A."/>
            <person name="Ward B.K."/>
            <person name="Temple S.E."/>
            <person name="Mark P.J."/>
            <person name="Minchin R.F."/>
            <person name="Ratajczak T."/>
        </authorList>
    </citation>
    <scope>NUCLEOTIDE SEQUENCE [MRNA]</scope>
</reference>
<reference key="2">
    <citation type="journal article" date="2005" name="Science">
        <title>The transcriptional landscape of the mammalian genome.</title>
        <authorList>
            <person name="Carninci P."/>
            <person name="Kasukawa T."/>
            <person name="Katayama S."/>
            <person name="Gough J."/>
            <person name="Frith M.C."/>
            <person name="Maeda N."/>
            <person name="Oyama R."/>
            <person name="Ravasi T."/>
            <person name="Lenhard B."/>
            <person name="Wells C."/>
            <person name="Kodzius R."/>
            <person name="Shimokawa K."/>
            <person name="Bajic V.B."/>
            <person name="Brenner S.E."/>
            <person name="Batalov S."/>
            <person name="Forrest A.R."/>
            <person name="Zavolan M."/>
            <person name="Davis M.J."/>
            <person name="Wilming L.G."/>
            <person name="Aidinis V."/>
            <person name="Allen J.E."/>
            <person name="Ambesi-Impiombato A."/>
            <person name="Apweiler R."/>
            <person name="Aturaliya R.N."/>
            <person name="Bailey T.L."/>
            <person name="Bansal M."/>
            <person name="Baxter L."/>
            <person name="Beisel K.W."/>
            <person name="Bersano T."/>
            <person name="Bono H."/>
            <person name="Chalk A.M."/>
            <person name="Chiu K.P."/>
            <person name="Choudhary V."/>
            <person name="Christoffels A."/>
            <person name="Clutterbuck D.R."/>
            <person name="Crowe M.L."/>
            <person name="Dalla E."/>
            <person name="Dalrymple B.P."/>
            <person name="de Bono B."/>
            <person name="Della Gatta G."/>
            <person name="di Bernardo D."/>
            <person name="Down T."/>
            <person name="Engstrom P."/>
            <person name="Fagiolini M."/>
            <person name="Faulkner G."/>
            <person name="Fletcher C.F."/>
            <person name="Fukushima T."/>
            <person name="Furuno M."/>
            <person name="Futaki S."/>
            <person name="Gariboldi M."/>
            <person name="Georgii-Hemming P."/>
            <person name="Gingeras T.R."/>
            <person name="Gojobori T."/>
            <person name="Green R.E."/>
            <person name="Gustincich S."/>
            <person name="Harbers M."/>
            <person name="Hayashi Y."/>
            <person name="Hensch T.K."/>
            <person name="Hirokawa N."/>
            <person name="Hill D."/>
            <person name="Huminiecki L."/>
            <person name="Iacono M."/>
            <person name="Ikeo K."/>
            <person name="Iwama A."/>
            <person name="Ishikawa T."/>
            <person name="Jakt M."/>
            <person name="Kanapin A."/>
            <person name="Katoh M."/>
            <person name="Kawasawa Y."/>
            <person name="Kelso J."/>
            <person name="Kitamura H."/>
            <person name="Kitano H."/>
            <person name="Kollias G."/>
            <person name="Krishnan S.P."/>
            <person name="Kruger A."/>
            <person name="Kummerfeld S.K."/>
            <person name="Kurochkin I.V."/>
            <person name="Lareau L.F."/>
            <person name="Lazarevic D."/>
            <person name="Lipovich L."/>
            <person name="Liu J."/>
            <person name="Liuni S."/>
            <person name="McWilliam S."/>
            <person name="Madan Babu M."/>
            <person name="Madera M."/>
            <person name="Marchionni L."/>
            <person name="Matsuda H."/>
            <person name="Matsuzawa S."/>
            <person name="Miki H."/>
            <person name="Mignone F."/>
            <person name="Miyake S."/>
            <person name="Morris K."/>
            <person name="Mottagui-Tabar S."/>
            <person name="Mulder N."/>
            <person name="Nakano N."/>
            <person name="Nakauchi H."/>
            <person name="Ng P."/>
            <person name="Nilsson R."/>
            <person name="Nishiguchi S."/>
            <person name="Nishikawa S."/>
            <person name="Nori F."/>
            <person name="Ohara O."/>
            <person name="Okazaki Y."/>
            <person name="Orlando V."/>
            <person name="Pang K.C."/>
            <person name="Pavan W.J."/>
            <person name="Pavesi G."/>
            <person name="Pesole G."/>
            <person name="Petrovsky N."/>
            <person name="Piazza S."/>
            <person name="Reed J."/>
            <person name="Reid J.F."/>
            <person name="Ring B.Z."/>
            <person name="Ringwald M."/>
            <person name="Rost B."/>
            <person name="Ruan Y."/>
            <person name="Salzberg S.L."/>
            <person name="Sandelin A."/>
            <person name="Schneider C."/>
            <person name="Schoenbach C."/>
            <person name="Sekiguchi K."/>
            <person name="Semple C.A."/>
            <person name="Seno S."/>
            <person name="Sessa L."/>
            <person name="Sheng Y."/>
            <person name="Shibata Y."/>
            <person name="Shimada H."/>
            <person name="Shimada K."/>
            <person name="Silva D."/>
            <person name="Sinclair B."/>
            <person name="Sperling S."/>
            <person name="Stupka E."/>
            <person name="Sugiura K."/>
            <person name="Sultana R."/>
            <person name="Takenaka Y."/>
            <person name="Taki K."/>
            <person name="Tammoja K."/>
            <person name="Tan S.L."/>
            <person name="Tang S."/>
            <person name="Taylor M.S."/>
            <person name="Tegner J."/>
            <person name="Teichmann S.A."/>
            <person name="Ueda H.R."/>
            <person name="van Nimwegen E."/>
            <person name="Verardo R."/>
            <person name="Wei C.L."/>
            <person name="Yagi K."/>
            <person name="Yamanishi H."/>
            <person name="Zabarovsky E."/>
            <person name="Zhu S."/>
            <person name="Zimmer A."/>
            <person name="Hide W."/>
            <person name="Bult C."/>
            <person name="Grimmond S.M."/>
            <person name="Teasdale R.D."/>
            <person name="Liu E.T."/>
            <person name="Brusic V."/>
            <person name="Quackenbush J."/>
            <person name="Wahlestedt C."/>
            <person name="Mattick J.S."/>
            <person name="Hume D.A."/>
            <person name="Kai C."/>
            <person name="Sasaki D."/>
            <person name="Tomaru Y."/>
            <person name="Fukuda S."/>
            <person name="Kanamori-Katayama M."/>
            <person name="Suzuki M."/>
            <person name="Aoki J."/>
            <person name="Arakawa T."/>
            <person name="Iida J."/>
            <person name="Imamura K."/>
            <person name="Itoh M."/>
            <person name="Kato T."/>
            <person name="Kawaji H."/>
            <person name="Kawagashira N."/>
            <person name="Kawashima T."/>
            <person name="Kojima M."/>
            <person name="Kondo S."/>
            <person name="Konno H."/>
            <person name="Nakano K."/>
            <person name="Ninomiya N."/>
            <person name="Nishio T."/>
            <person name="Okada M."/>
            <person name="Plessy C."/>
            <person name="Shibata K."/>
            <person name="Shiraki T."/>
            <person name="Suzuki S."/>
            <person name="Tagami M."/>
            <person name="Waki K."/>
            <person name="Watahiki A."/>
            <person name="Okamura-Oho Y."/>
            <person name="Suzuki H."/>
            <person name="Kawai J."/>
            <person name="Hayashizaki Y."/>
        </authorList>
    </citation>
    <scope>NUCLEOTIDE SEQUENCE [LARGE SCALE MRNA]</scope>
    <source>
        <strain>C57BL/6J</strain>
        <tissue>Embryo</tissue>
        <tissue>Stomach</tissue>
    </source>
</reference>
<reference key="3">
    <citation type="journal article" date="2009" name="PLoS Biol.">
        <title>Lineage-specific biology revealed by a finished genome assembly of the mouse.</title>
        <authorList>
            <person name="Church D.M."/>
            <person name="Goodstadt L."/>
            <person name="Hillier L.W."/>
            <person name="Zody M.C."/>
            <person name="Goldstein S."/>
            <person name="She X."/>
            <person name="Bult C.J."/>
            <person name="Agarwala R."/>
            <person name="Cherry J.L."/>
            <person name="DiCuccio M."/>
            <person name="Hlavina W."/>
            <person name="Kapustin Y."/>
            <person name="Meric P."/>
            <person name="Maglott D."/>
            <person name="Birtle Z."/>
            <person name="Marques A.C."/>
            <person name="Graves T."/>
            <person name="Zhou S."/>
            <person name="Teague B."/>
            <person name="Potamousis K."/>
            <person name="Churas C."/>
            <person name="Place M."/>
            <person name="Herschleb J."/>
            <person name="Runnheim R."/>
            <person name="Forrest D."/>
            <person name="Amos-Landgraf J."/>
            <person name="Schwartz D.C."/>
            <person name="Cheng Z."/>
            <person name="Lindblad-Toh K."/>
            <person name="Eichler E.E."/>
            <person name="Ponting C.P."/>
        </authorList>
    </citation>
    <scope>NUCLEOTIDE SEQUENCE [LARGE SCALE GENOMIC DNA]</scope>
    <source>
        <strain>C57BL/6J</strain>
    </source>
</reference>
<reference key="4">
    <citation type="submission" date="2005-09" db="EMBL/GenBank/DDBJ databases">
        <authorList>
            <person name="Mural R.J."/>
            <person name="Adams M.D."/>
            <person name="Myers E.W."/>
            <person name="Smith H.O."/>
            <person name="Venter J.C."/>
        </authorList>
    </citation>
    <scope>NUCLEOTIDE SEQUENCE [LARGE SCALE GENOMIC DNA]</scope>
</reference>
<reference key="5">
    <citation type="journal article" date="2004" name="Genome Res.">
        <title>The status, quality, and expansion of the NIH full-length cDNA project: the Mammalian Gene Collection (MGC).</title>
        <authorList>
            <consortium name="The MGC Project Team"/>
        </authorList>
    </citation>
    <scope>NUCLEOTIDE SEQUENCE [LARGE SCALE MRNA]</scope>
    <source>
        <tissue>Salivary gland</tissue>
    </source>
</reference>
<reference key="6">
    <citation type="journal article" date="2010" name="Cell">
        <title>A tissue-specific atlas of mouse protein phosphorylation and expression.</title>
        <authorList>
            <person name="Huttlin E.L."/>
            <person name="Jedrychowski M.P."/>
            <person name="Elias J.E."/>
            <person name="Goswami T."/>
            <person name="Rad R."/>
            <person name="Beausoleil S.A."/>
            <person name="Villen J."/>
            <person name="Haas W."/>
            <person name="Sowa M.E."/>
            <person name="Gygi S.P."/>
        </authorList>
    </citation>
    <scope>IDENTIFICATION BY MASS SPECTROMETRY [LARGE SCALE ANALYSIS]</scope>
    <source>
        <tissue>Brain</tissue>
        <tissue>Brown adipose tissue</tissue>
        <tissue>Heart</tissue>
        <tissue>Kidney</tissue>
        <tissue>Liver</tissue>
        <tissue>Lung</tissue>
        <tissue>Spleen</tissue>
        <tissue>Testis</tissue>
    </source>
</reference>
<reference key="7">
    <citation type="journal article" date="2013" name="Mol. Cell">
        <title>SIRT5-mediated lysine desuccinylation impacts diverse metabolic pathways.</title>
        <authorList>
            <person name="Park J."/>
            <person name="Chen Y."/>
            <person name="Tishkoff D.X."/>
            <person name="Peng C."/>
            <person name="Tan M."/>
            <person name="Dai L."/>
            <person name="Xie Z."/>
            <person name="Zhang Y."/>
            <person name="Zwaans B.M."/>
            <person name="Skinner M.E."/>
            <person name="Lombard D.B."/>
            <person name="Zhao Y."/>
        </authorList>
    </citation>
    <scope>SUCCINYLATION [LARGE SCALE ANALYSIS] AT LYS-45; LYS-48; LYS-57 AND LYS-166</scope>
    <scope>IDENTIFICATION BY MASS SPECTROMETRY [LARGE SCALE ANALYSIS]</scope>
    <source>
        <tissue>Embryonic fibroblast</tissue>
        <tissue>Liver</tissue>
    </source>
</reference>
<comment type="subcellular location">
    <subcellularLocation>
        <location>Cytoplasm</location>
        <location>Cytosol</location>
    </subcellularLocation>
    <text evidence="1">May be part of some vesicular structure distinct from lysosomal vesicles.</text>
</comment>
<comment type="similarity">
    <text evidence="2">Belongs to the NipSnap family.</text>
</comment>
<gene>
    <name type="primary">Nipsnap3b</name>
    <name type="synonym">Nipsnap3a</name>
</gene>
<name>NPS3B_MOUSE</name>
<accession>Q9CQE1</accession>
<accession>B1AWZ4</accession>
<accession>Q8VHX9</accession>
<evidence type="ECO:0000250" key="1"/>
<evidence type="ECO:0000305" key="2"/>
<evidence type="ECO:0007744" key="3">
    <source>
    </source>
</evidence>
<protein>
    <recommendedName>
        <fullName>Protein NipSnap homolog 3B</fullName>
        <shortName>NipSnap3B</shortName>
    </recommendedName>
    <alternativeName>
        <fullName>NipSnap-related protein</fullName>
    </alternativeName>
    <alternativeName>
        <fullName>Protein NipSnap homolog 3A</fullName>
        <shortName>NipSnap3A</shortName>
    </alternativeName>
</protein>